<evidence type="ECO:0000255" key="1">
    <source>
        <dbReference type="HAMAP-Rule" id="MF_01561"/>
    </source>
</evidence>
<accession>B5ESI0</accession>
<reference key="1">
    <citation type="submission" date="2008-08" db="EMBL/GenBank/DDBJ databases">
        <title>Complete sequence of Vibrio fischeri strain MJ11.</title>
        <authorList>
            <person name="Mandel M.J."/>
            <person name="Stabb E.V."/>
            <person name="Ruby E.G."/>
            <person name="Ferriera S."/>
            <person name="Johnson J."/>
            <person name="Kravitz S."/>
            <person name="Beeson K."/>
            <person name="Sutton G."/>
            <person name="Rogers Y.-H."/>
            <person name="Friedman R."/>
            <person name="Frazier M."/>
            <person name="Venter J.C."/>
        </authorList>
    </citation>
    <scope>NUCLEOTIDE SEQUENCE [LARGE SCALE GENOMIC DNA]</scope>
    <source>
        <strain>MJ11</strain>
    </source>
</reference>
<comment type="cofactor">
    <cofactor evidence="1">
        <name>Zn(2+)</name>
        <dbReference type="ChEBI" id="CHEBI:29105"/>
    </cofactor>
    <text evidence="1">Binds 3 Zn(2+) ions per subunit.</text>
</comment>
<comment type="similarity">
    <text evidence="1">Belongs to the PHP family.</text>
</comment>
<sequence length="248" mass="27674">MNVVVDTHTHTLASGHAYSTIIENAQSAQNKGLKLLCTTDHAPEMPGAPHYWYFNNQRILPRFLHQVGILRGVEANILNVKGEIDLPFSSDQHLDWVIASFHEPVFAPASEAEHTAALLNVIKSGRIDVLGHSGNPNYPFDIERVLQCAKEYNVAIEVNNTSLTGKSRKGSDVRCDKIVEIGKEIGVYFTTGSDAHFCEEIARLDLAIALLEKYEIAEDKIITTSTSRFLNFLLLRGKLAIPEFERLY</sequence>
<keyword id="KW-0378">Hydrolase</keyword>
<keyword id="KW-0479">Metal-binding</keyword>
<keyword id="KW-0862">Zinc</keyword>
<proteinExistence type="inferred from homology"/>
<feature type="chain" id="PRO_0000382660" description="Probable phosphatase VFMJ11_A0091">
    <location>
        <begin position="1"/>
        <end position="248"/>
    </location>
</feature>
<feature type="binding site" evidence="1">
    <location>
        <position position="8"/>
    </location>
    <ligand>
        <name>Zn(2+)</name>
        <dbReference type="ChEBI" id="CHEBI:29105"/>
        <label>1</label>
    </ligand>
</feature>
<feature type="binding site" evidence="1">
    <location>
        <position position="10"/>
    </location>
    <ligand>
        <name>Zn(2+)</name>
        <dbReference type="ChEBI" id="CHEBI:29105"/>
        <label>1</label>
    </ligand>
</feature>
<feature type="binding site" evidence="1">
    <location>
        <position position="16"/>
    </location>
    <ligand>
        <name>Zn(2+)</name>
        <dbReference type="ChEBI" id="CHEBI:29105"/>
        <label>2</label>
    </ligand>
</feature>
<feature type="binding site" evidence="1">
    <location>
        <position position="41"/>
    </location>
    <ligand>
        <name>Zn(2+)</name>
        <dbReference type="ChEBI" id="CHEBI:29105"/>
        <label>2</label>
    </ligand>
</feature>
<feature type="binding site" evidence="1">
    <location>
        <position position="74"/>
    </location>
    <ligand>
        <name>Zn(2+)</name>
        <dbReference type="ChEBI" id="CHEBI:29105"/>
        <label>1</label>
    </ligand>
</feature>
<feature type="binding site" evidence="1">
    <location>
        <position position="74"/>
    </location>
    <ligand>
        <name>Zn(2+)</name>
        <dbReference type="ChEBI" id="CHEBI:29105"/>
        <label>3</label>
    </ligand>
</feature>
<feature type="binding site" evidence="1">
    <location>
        <position position="102"/>
    </location>
    <ligand>
        <name>Zn(2+)</name>
        <dbReference type="ChEBI" id="CHEBI:29105"/>
        <label>3</label>
    </ligand>
</feature>
<feature type="binding site" evidence="1">
    <location>
        <position position="132"/>
    </location>
    <ligand>
        <name>Zn(2+)</name>
        <dbReference type="ChEBI" id="CHEBI:29105"/>
        <label>3</label>
    </ligand>
</feature>
<feature type="binding site" evidence="1">
    <location>
        <position position="194"/>
    </location>
    <ligand>
        <name>Zn(2+)</name>
        <dbReference type="ChEBI" id="CHEBI:29105"/>
        <label>1</label>
    </ligand>
</feature>
<feature type="binding site" evidence="1">
    <location>
        <position position="196"/>
    </location>
    <ligand>
        <name>Zn(2+)</name>
        <dbReference type="ChEBI" id="CHEBI:29105"/>
        <label>2</label>
    </ligand>
</feature>
<protein>
    <recommendedName>
        <fullName evidence="1">Probable phosphatase VFMJ11_A0091</fullName>
        <ecNumber evidence="1">3.1.3.-</ecNumber>
    </recommendedName>
</protein>
<organism>
    <name type="scientific">Aliivibrio fischeri (strain MJ11)</name>
    <name type="common">Vibrio fischeri</name>
    <dbReference type="NCBI Taxonomy" id="388396"/>
    <lineage>
        <taxon>Bacteria</taxon>
        <taxon>Pseudomonadati</taxon>
        <taxon>Pseudomonadota</taxon>
        <taxon>Gammaproteobacteria</taxon>
        <taxon>Vibrionales</taxon>
        <taxon>Vibrionaceae</taxon>
        <taxon>Aliivibrio</taxon>
    </lineage>
</organism>
<dbReference type="EC" id="3.1.3.-" evidence="1"/>
<dbReference type="EMBL" id="CP001133">
    <property type="protein sequence ID" value="ACH63536.1"/>
    <property type="molecule type" value="Genomic_DNA"/>
</dbReference>
<dbReference type="RefSeq" id="WP_012534745.1">
    <property type="nucleotide sequence ID" value="NC_011186.1"/>
</dbReference>
<dbReference type="SMR" id="B5ESI0"/>
<dbReference type="KEGG" id="vfm:VFMJ11_A0091"/>
<dbReference type="HOGENOM" id="CLU_061999_0_1_6"/>
<dbReference type="Proteomes" id="UP000001857">
    <property type="component" value="Chromosome II"/>
</dbReference>
<dbReference type="GO" id="GO:0005829">
    <property type="term" value="C:cytosol"/>
    <property type="evidence" value="ECO:0007669"/>
    <property type="project" value="TreeGrafter"/>
</dbReference>
<dbReference type="GO" id="GO:0016791">
    <property type="term" value="F:phosphatase activity"/>
    <property type="evidence" value="ECO:0007669"/>
    <property type="project" value="UniProtKB-UniRule"/>
</dbReference>
<dbReference type="GO" id="GO:0008270">
    <property type="term" value="F:zinc ion binding"/>
    <property type="evidence" value="ECO:0007669"/>
    <property type="project" value="UniProtKB-UniRule"/>
</dbReference>
<dbReference type="GO" id="GO:0071978">
    <property type="term" value="P:bacterial-type flagellum-dependent swarming motility"/>
    <property type="evidence" value="ECO:0007669"/>
    <property type="project" value="TreeGrafter"/>
</dbReference>
<dbReference type="CDD" id="cd07437">
    <property type="entry name" value="PHP_HisPPase_Ycdx_like"/>
    <property type="match status" value="1"/>
</dbReference>
<dbReference type="Gene3D" id="3.20.20.140">
    <property type="entry name" value="Metal-dependent hydrolases"/>
    <property type="match status" value="1"/>
</dbReference>
<dbReference type="HAMAP" id="MF_01561">
    <property type="entry name" value="YcdX_phosphat"/>
    <property type="match status" value="1"/>
</dbReference>
<dbReference type="InterPro" id="IPR023710">
    <property type="entry name" value="Phosphatase_YcdX_put"/>
</dbReference>
<dbReference type="InterPro" id="IPR004013">
    <property type="entry name" value="PHP_dom"/>
</dbReference>
<dbReference type="InterPro" id="IPR050243">
    <property type="entry name" value="PHP_phosphatase"/>
</dbReference>
<dbReference type="InterPro" id="IPR003141">
    <property type="entry name" value="Pol/His_phosphatase_N"/>
</dbReference>
<dbReference type="InterPro" id="IPR016195">
    <property type="entry name" value="Pol/histidinol_Pase-like"/>
</dbReference>
<dbReference type="NCBIfam" id="NF006702">
    <property type="entry name" value="PRK09248.1"/>
    <property type="match status" value="1"/>
</dbReference>
<dbReference type="PANTHER" id="PTHR36928">
    <property type="entry name" value="PHOSPHATASE YCDX-RELATED"/>
    <property type="match status" value="1"/>
</dbReference>
<dbReference type="PANTHER" id="PTHR36928:SF1">
    <property type="entry name" value="PHOSPHATASE YCDX-RELATED"/>
    <property type="match status" value="1"/>
</dbReference>
<dbReference type="Pfam" id="PF02811">
    <property type="entry name" value="PHP"/>
    <property type="match status" value="1"/>
</dbReference>
<dbReference type="SMART" id="SM00481">
    <property type="entry name" value="POLIIIAc"/>
    <property type="match status" value="1"/>
</dbReference>
<dbReference type="SUPFAM" id="SSF89550">
    <property type="entry name" value="PHP domain-like"/>
    <property type="match status" value="1"/>
</dbReference>
<gene>
    <name type="ordered locus">VFMJ11_A0091</name>
</gene>
<name>Y2891_ALIFM</name>